<accession>Q59N20</accession>
<accession>A0A1D8PSW0</accession>
<accession>Q59N03</accession>
<protein>
    <recommendedName>
        <fullName>Transcription activator MSS11</fullName>
    </recommendedName>
</protein>
<sequence>MSKPPPQHQSKNANNSLSSPVSDKQSNDSRQLLLAHLYNYFKTNGLEETAQALLIECNNTIPKATTNSKGYSLDNSGPDQKDTFLDQWWGLLWSIQSSINPNLNQMTNPSGILTPQHQMIVQQRMLQQQQQQAQQQQQQAQQQQAQQQQQQQQLLQQQRLQQQAMIQQQHQQQLINNLSARQQQVGLSTTTNQMGPPGSNSNNLQSNMSPNNEQLQSQARLQQLKLQFQQQQQQQLQQQQQQLQLQQQQQQQQQQQQQQQQQQQQQQRQQQRQRQKKFQRQLSTSSQKSPVINNGQPQQQLQQDQRPASAPQNQPTPGNNNNNNNNTNAVSPKLHRQSVDDYQMNLLQMENQNNSQRQKYLNNQQTRNSQQQQQQQQSQSQSQQSSPFQPPAQQPKNSTTTSTNTTTSRAQKSSRKQQPKNSRRQSVQQQQQQQPQQQPQQSQQMSTSSQSFTAANNSNNVNNTFDISPQIQDQGMLSTKEQQQQPQQPQPQPQSQPQSQSQSLPSNNNNNNNNKQDVVNVVFDDAFFSGNLLLDDFNEFANSTSNNGNGNGNNDMNSQFNNTQTERIMFSMPPNQNQNQFPSQSGDGGGGGGGSMQPNFFEGIELGDGNNSGNGDDDDAPIITTDWLSSMGSGPGYE</sequence>
<gene>
    <name type="primary">MSS11</name>
    <name type="ordered locus">CAALFM_CR04840CA</name>
    <name type="ORF">CaO19.13686</name>
    <name type="ORF">CaO19.6309</name>
</gene>
<proteinExistence type="evidence at protein level"/>
<keyword id="KW-0010">Activator</keyword>
<keyword id="KW-0963">Cytoplasm</keyword>
<keyword id="KW-0539">Nucleus</keyword>
<keyword id="KW-1185">Reference proteome</keyword>
<keyword id="KW-0804">Transcription</keyword>
<keyword id="KW-0805">Transcription regulation</keyword>
<name>MSS11_CANAL</name>
<dbReference type="EMBL" id="CP017630">
    <property type="protein sequence ID" value="AOW31217.1"/>
    <property type="molecule type" value="Genomic_DNA"/>
</dbReference>
<dbReference type="RefSeq" id="XP_711094.2">
    <property type="nucleotide sequence ID" value="XM_706002.2"/>
</dbReference>
<dbReference type="SMR" id="Q59N20"/>
<dbReference type="BioGRID" id="1230377">
    <property type="interactions" value="2"/>
</dbReference>
<dbReference type="STRING" id="237561.Q59N20"/>
<dbReference type="EnsemblFungi" id="CR_04840C_A-T">
    <property type="protein sequence ID" value="CR_04840C_A-T-p1"/>
    <property type="gene ID" value="CR_04840C_A"/>
</dbReference>
<dbReference type="GeneID" id="3647296"/>
<dbReference type="KEGG" id="cal:CAALFM_CR04840CA"/>
<dbReference type="CGD" id="CAL0000199904">
    <property type="gene designation" value="MSS11"/>
</dbReference>
<dbReference type="VEuPathDB" id="FungiDB:CR_04840C_A"/>
<dbReference type="eggNOG" id="ENOG502S549">
    <property type="taxonomic scope" value="Eukaryota"/>
</dbReference>
<dbReference type="HOGENOM" id="CLU_027504_0_0_1"/>
<dbReference type="InParanoid" id="Q59N20"/>
<dbReference type="OrthoDB" id="4036671at2759"/>
<dbReference type="PHI-base" id="PHI:4220"/>
<dbReference type="PRO" id="PR:Q59N20"/>
<dbReference type="Proteomes" id="UP000000559">
    <property type="component" value="Chromosome R"/>
</dbReference>
<dbReference type="GO" id="GO:0005737">
    <property type="term" value="C:cytoplasm"/>
    <property type="evidence" value="ECO:0007669"/>
    <property type="project" value="UniProtKB-SubCell"/>
</dbReference>
<dbReference type="GO" id="GO:0005634">
    <property type="term" value="C:nucleus"/>
    <property type="evidence" value="ECO:0007669"/>
    <property type="project" value="UniProtKB-SubCell"/>
</dbReference>
<dbReference type="GO" id="GO:0003700">
    <property type="term" value="F:DNA-binding transcription factor activity"/>
    <property type="evidence" value="ECO:0000314"/>
    <property type="project" value="CGD"/>
</dbReference>
<dbReference type="GO" id="GO:0036244">
    <property type="term" value="P:cellular response to neutral pH"/>
    <property type="evidence" value="ECO:0000315"/>
    <property type="project" value="CGD"/>
</dbReference>
<dbReference type="GO" id="GO:0030447">
    <property type="term" value="P:filamentous growth"/>
    <property type="evidence" value="ECO:0000315"/>
    <property type="project" value="CGD"/>
</dbReference>
<dbReference type="GO" id="GO:0036178">
    <property type="term" value="P:filamentous growth of a population of unicellular organisms in response to neutral pH"/>
    <property type="evidence" value="ECO:0000315"/>
    <property type="project" value="CGD"/>
</dbReference>
<dbReference type="GO" id="GO:1900442">
    <property type="term" value="P:positive regulation of filamentous growth of a population of unicellular organisms in response to neutral pH"/>
    <property type="evidence" value="ECO:0000315"/>
    <property type="project" value="CGD"/>
</dbReference>
<dbReference type="GO" id="GO:0045944">
    <property type="term" value="P:positive regulation of transcription by RNA polymerase II"/>
    <property type="evidence" value="ECO:0000314"/>
    <property type="project" value="CGD"/>
</dbReference>
<dbReference type="InterPro" id="IPR006594">
    <property type="entry name" value="LisH"/>
</dbReference>
<dbReference type="SMART" id="SM00667">
    <property type="entry name" value="LisH"/>
    <property type="match status" value="1"/>
</dbReference>
<dbReference type="PROSITE" id="PS50896">
    <property type="entry name" value="LISH"/>
    <property type="match status" value="1"/>
</dbReference>
<feature type="chain" id="PRO_0000333383" description="Transcription activator MSS11">
    <location>
        <begin position="1"/>
        <end position="638"/>
    </location>
</feature>
<feature type="domain" description="LisH" evidence="2">
    <location>
        <begin position="29"/>
        <end position="61"/>
    </location>
</feature>
<feature type="region of interest" description="Disordered" evidence="3">
    <location>
        <begin position="1"/>
        <end position="26"/>
    </location>
</feature>
<feature type="region of interest" description="Disordered" evidence="3">
    <location>
        <begin position="187"/>
        <end position="216"/>
    </location>
</feature>
<feature type="region of interest" description="Disordered" evidence="3">
    <location>
        <begin position="270"/>
        <end position="331"/>
    </location>
</feature>
<feature type="region of interest" description="Disordered" evidence="3">
    <location>
        <begin position="362"/>
        <end position="515"/>
    </location>
</feature>
<feature type="region of interest" description="Disordered" evidence="3">
    <location>
        <begin position="572"/>
        <end position="638"/>
    </location>
</feature>
<feature type="compositionally biased region" description="Polar residues" evidence="3">
    <location>
        <begin position="8"/>
        <end position="26"/>
    </location>
</feature>
<feature type="compositionally biased region" description="Polar residues" evidence="3">
    <location>
        <begin position="283"/>
        <end position="295"/>
    </location>
</feature>
<feature type="compositionally biased region" description="Low complexity" evidence="3">
    <location>
        <begin position="296"/>
        <end position="328"/>
    </location>
</feature>
<feature type="compositionally biased region" description="Low complexity" evidence="3">
    <location>
        <begin position="369"/>
        <end position="387"/>
    </location>
</feature>
<feature type="compositionally biased region" description="Low complexity" evidence="3">
    <location>
        <begin position="394"/>
        <end position="408"/>
    </location>
</feature>
<feature type="compositionally biased region" description="Basic residues" evidence="3">
    <location>
        <begin position="412"/>
        <end position="423"/>
    </location>
</feature>
<feature type="compositionally biased region" description="Low complexity" evidence="3">
    <location>
        <begin position="425"/>
        <end position="465"/>
    </location>
</feature>
<feature type="compositionally biased region" description="Polar residues" evidence="3">
    <location>
        <begin position="466"/>
        <end position="481"/>
    </location>
</feature>
<feature type="compositionally biased region" description="Low complexity" evidence="3">
    <location>
        <begin position="495"/>
        <end position="515"/>
    </location>
</feature>
<feature type="compositionally biased region" description="Low complexity" evidence="3">
    <location>
        <begin position="572"/>
        <end position="585"/>
    </location>
</feature>
<feature type="compositionally biased region" description="Gly residues" evidence="3">
    <location>
        <begin position="586"/>
        <end position="595"/>
    </location>
</feature>
<comment type="function">
    <text evidence="4">Transcription factor that regulates pseudohyphal differentiation, invasive growth, floculation, adhesion and starch metabolism in response to nutrient availability.</text>
</comment>
<comment type="subunit">
    <text evidence="4">Interacts with FLO8.</text>
</comment>
<comment type="subcellular location">
    <subcellularLocation>
        <location evidence="1">Cytoplasm</location>
    </subcellularLocation>
    <subcellularLocation>
        <location evidence="1">Nucleus</location>
    </subcellularLocation>
</comment>
<comment type="similarity">
    <text evidence="5">Belongs to the MSS11 family.</text>
</comment>
<organism>
    <name type="scientific">Candida albicans (strain SC5314 / ATCC MYA-2876)</name>
    <name type="common">Yeast</name>
    <dbReference type="NCBI Taxonomy" id="237561"/>
    <lineage>
        <taxon>Eukaryota</taxon>
        <taxon>Fungi</taxon>
        <taxon>Dikarya</taxon>
        <taxon>Ascomycota</taxon>
        <taxon>Saccharomycotina</taxon>
        <taxon>Pichiomycetes</taxon>
        <taxon>Debaryomycetaceae</taxon>
        <taxon>Candida/Lodderomyces clade</taxon>
        <taxon>Candida</taxon>
    </lineage>
</organism>
<evidence type="ECO:0000250" key="1"/>
<evidence type="ECO:0000255" key="2">
    <source>
        <dbReference type="PROSITE-ProRule" id="PRU00126"/>
    </source>
</evidence>
<evidence type="ECO:0000256" key="3">
    <source>
        <dbReference type="SAM" id="MobiDB-lite"/>
    </source>
</evidence>
<evidence type="ECO:0000269" key="4">
    <source>
    </source>
</evidence>
<evidence type="ECO:0000305" key="5"/>
<reference key="1">
    <citation type="journal article" date="2004" name="Proc. Natl. Acad. Sci. U.S.A.">
        <title>The diploid genome sequence of Candida albicans.</title>
        <authorList>
            <person name="Jones T."/>
            <person name="Federspiel N.A."/>
            <person name="Chibana H."/>
            <person name="Dungan J."/>
            <person name="Kalman S."/>
            <person name="Magee B.B."/>
            <person name="Newport G."/>
            <person name="Thorstenson Y.R."/>
            <person name="Agabian N."/>
            <person name="Magee P.T."/>
            <person name="Davis R.W."/>
            <person name="Scherer S."/>
        </authorList>
    </citation>
    <scope>NUCLEOTIDE SEQUENCE [LARGE SCALE GENOMIC DNA]</scope>
    <source>
        <strain>SC5314 / ATCC MYA-2876</strain>
    </source>
</reference>
<reference key="2">
    <citation type="journal article" date="2007" name="Genome Biol.">
        <title>Assembly of the Candida albicans genome into sixteen supercontigs aligned on the eight chromosomes.</title>
        <authorList>
            <person name="van het Hoog M."/>
            <person name="Rast T.J."/>
            <person name="Martchenko M."/>
            <person name="Grindle S."/>
            <person name="Dignard D."/>
            <person name="Hogues H."/>
            <person name="Cuomo C."/>
            <person name="Berriman M."/>
            <person name="Scherer S."/>
            <person name="Magee B.B."/>
            <person name="Whiteway M."/>
            <person name="Chibana H."/>
            <person name="Nantel A."/>
            <person name="Magee P.T."/>
        </authorList>
    </citation>
    <scope>GENOME REANNOTATION</scope>
    <source>
        <strain>SC5314 / ATCC MYA-2876</strain>
    </source>
</reference>
<reference key="3">
    <citation type="journal article" date="2013" name="Genome Biol.">
        <title>Assembly of a phased diploid Candida albicans genome facilitates allele-specific measurements and provides a simple model for repeat and indel structure.</title>
        <authorList>
            <person name="Muzzey D."/>
            <person name="Schwartz K."/>
            <person name="Weissman J.S."/>
            <person name="Sherlock G."/>
        </authorList>
    </citation>
    <scope>NUCLEOTIDE SEQUENCE [LARGE SCALE GENOMIC DNA]</scope>
    <scope>GENOME REANNOTATION</scope>
    <source>
        <strain>SC5314 / ATCC MYA-2876</strain>
    </source>
</reference>
<reference key="4">
    <citation type="journal article" date="2009" name="Eukaryot. Cell">
        <title>Mss11, a transcriptional activator, is required for hyphal development in Candida albicans.</title>
        <authorList>
            <person name="Su C."/>
            <person name="Li Y."/>
            <person name="Lu Y."/>
            <person name="Chen J."/>
        </authorList>
    </citation>
    <scope>FUNCTION</scope>
    <scope>INTERACTION WITH FLO8</scope>
</reference>